<sequence length="399" mass="46147">MPKETPSKAAADALSDLEIKDSKSNLNKELETLREENRVKSDMLKEKLSKDAENHKAYLKSHQVHRHKLKEMEKEEPLLNEDKERTVLFPIKYHEIWQAYKRAEASFWTAEEIDLSKDIHDWNNRMNENERFFISRVLAFFAASDGIVNENLVENFSTEVQIPEAKSFYGFQIMIENIHSETYSLLIDTYIKDPKESEFLFNAIHTIPEIGEKAEWALRWIQDADALFGERLVAFASIEGVFFSGSFASIFWLKKRGMMPGLTFSNELICRDEGLHTDFACLLFAHLKNKPDPAIVEKIVTEAVEIEQRYFLDALPVALLGMNADLMNQYVEFVADRLLVAFGNKKYYKVENPFDFMENISLAGKTNFFEKRVSDYQKAGVMSKSTKQEAGAFTFNEDF</sequence>
<name>RIR2_YEAST</name>
<protein>
    <recommendedName>
        <fullName>Ribonucleoside-diphosphate reductase small chain 1</fullName>
        <ecNumber>1.17.4.1</ecNumber>
    </recommendedName>
    <alternativeName>
        <fullName>Ribonucleotide reductase R2 subunit 1</fullName>
    </alternativeName>
    <alternativeName>
        <fullName>Ribonucleotide reductase small subunit 1</fullName>
    </alternativeName>
</protein>
<dbReference type="EC" id="1.17.4.1"/>
<dbReference type="EMBL" id="M17221">
    <property type="protein sequence ID" value="AAA34987.1"/>
    <property type="molecule type" value="Genomic_DNA"/>
</dbReference>
<dbReference type="EMBL" id="M17789">
    <property type="protein sequence ID" value="AAA34988.1"/>
    <property type="molecule type" value="Genomic_DNA"/>
</dbReference>
<dbReference type="EMBL" id="Z49301">
    <property type="protein sequence ID" value="CAA89317.1"/>
    <property type="molecule type" value="Genomic_DNA"/>
</dbReference>
<dbReference type="EMBL" id="BK006943">
    <property type="protein sequence ID" value="DAA08772.1"/>
    <property type="molecule type" value="Genomic_DNA"/>
</dbReference>
<dbReference type="PIR" id="A26916">
    <property type="entry name" value="A26916"/>
</dbReference>
<dbReference type="RefSeq" id="NP_012508.1">
    <property type="nucleotide sequence ID" value="NM_001181460.1"/>
</dbReference>
<dbReference type="PDB" id="1JK0">
    <property type="method" value="X-ray"/>
    <property type="resolution" value="2.80 A"/>
    <property type="chains" value="A=1-399"/>
</dbReference>
<dbReference type="PDB" id="1SMQ">
    <property type="method" value="X-ray"/>
    <property type="resolution" value="3.10 A"/>
    <property type="chains" value="A/B/C/D=1-399"/>
</dbReference>
<dbReference type="PDB" id="2CVY">
    <property type="method" value="X-ray"/>
    <property type="resolution" value="2.40 A"/>
    <property type="chains" value="B=391-399"/>
</dbReference>
<dbReference type="PDBsum" id="1JK0"/>
<dbReference type="PDBsum" id="1SMQ"/>
<dbReference type="PDBsum" id="2CVY"/>
<dbReference type="SMR" id="P09938"/>
<dbReference type="BioGRID" id="33733">
    <property type="interactions" value="94"/>
</dbReference>
<dbReference type="ComplexPortal" id="CPX-1102">
    <property type="entry name" value="Ribonucleoside-diphosphate reductase variant 1"/>
</dbReference>
<dbReference type="ComplexPortal" id="CPX-1103">
    <property type="entry name" value="Ribonucleoside-diphosphate reductase variant 2"/>
</dbReference>
<dbReference type="DIP" id="DIP-5671N"/>
<dbReference type="FunCoup" id="P09938">
    <property type="interactions" value="1689"/>
</dbReference>
<dbReference type="IntAct" id="P09938">
    <property type="interactions" value="31"/>
</dbReference>
<dbReference type="MINT" id="P09938"/>
<dbReference type="STRING" id="4932.YJL026W"/>
<dbReference type="iPTMnet" id="P09938"/>
<dbReference type="PaxDb" id="4932-YJL026W"/>
<dbReference type="PeptideAtlas" id="P09938"/>
<dbReference type="TopDownProteomics" id="P09938"/>
<dbReference type="EnsemblFungi" id="YJL026W_mRNA">
    <property type="protein sequence ID" value="YJL026W"/>
    <property type="gene ID" value="YJL026W"/>
</dbReference>
<dbReference type="GeneID" id="853427"/>
<dbReference type="KEGG" id="sce:YJL026W"/>
<dbReference type="AGR" id="SGD:S000003563"/>
<dbReference type="SGD" id="S000003563">
    <property type="gene designation" value="RNR2"/>
</dbReference>
<dbReference type="VEuPathDB" id="FungiDB:YJL026W"/>
<dbReference type="eggNOG" id="KOG1567">
    <property type="taxonomic scope" value="Eukaryota"/>
</dbReference>
<dbReference type="GeneTree" id="ENSGT00390000013305"/>
<dbReference type="HOGENOM" id="CLU_035339_2_1_1"/>
<dbReference type="InParanoid" id="P09938"/>
<dbReference type="OMA" id="SNPFPWM"/>
<dbReference type="OrthoDB" id="10248373at2759"/>
<dbReference type="BioCyc" id="MetaCyc:YJL026W-MONOMER"/>
<dbReference type="BioCyc" id="YEAST:YJL026W-MONOMER"/>
<dbReference type="Reactome" id="R-SCE-499943">
    <property type="pathway name" value="Interconversion of nucleotide di- and triphosphates"/>
</dbReference>
<dbReference type="BioGRID-ORCS" id="853427">
    <property type="hits" value="4 hits in 10 CRISPR screens"/>
</dbReference>
<dbReference type="CD-CODE" id="E03F929F">
    <property type="entry name" value="Stress granule"/>
</dbReference>
<dbReference type="EvolutionaryTrace" id="P09938"/>
<dbReference type="PRO" id="PR:P09938"/>
<dbReference type="Proteomes" id="UP000002311">
    <property type="component" value="Chromosome X"/>
</dbReference>
<dbReference type="RNAct" id="P09938">
    <property type="molecule type" value="protein"/>
</dbReference>
<dbReference type="GO" id="GO:0005737">
    <property type="term" value="C:cytoplasm"/>
    <property type="evidence" value="ECO:0000314"/>
    <property type="project" value="SGD"/>
</dbReference>
<dbReference type="GO" id="GO:0005634">
    <property type="term" value="C:nucleus"/>
    <property type="evidence" value="ECO:0000314"/>
    <property type="project" value="SGD"/>
</dbReference>
<dbReference type="GO" id="GO:0005971">
    <property type="term" value="C:ribonucleoside-diphosphate reductase complex"/>
    <property type="evidence" value="ECO:0000314"/>
    <property type="project" value="CAFA"/>
</dbReference>
<dbReference type="GO" id="GO:0008198">
    <property type="term" value="F:ferrous iron binding"/>
    <property type="evidence" value="ECO:0000314"/>
    <property type="project" value="CAFA"/>
</dbReference>
<dbReference type="GO" id="GO:0060090">
    <property type="term" value="F:molecular adaptor activity"/>
    <property type="evidence" value="ECO:0000269"/>
    <property type="project" value="DisProt"/>
</dbReference>
<dbReference type="GO" id="GO:0046982">
    <property type="term" value="F:protein heterodimerization activity"/>
    <property type="evidence" value="ECO:0000314"/>
    <property type="project" value="CAFA"/>
</dbReference>
<dbReference type="GO" id="GO:0004748">
    <property type="term" value="F:ribonucleoside-diphosphate reductase activity, thioredoxin disulfide as acceptor"/>
    <property type="evidence" value="ECO:0000314"/>
    <property type="project" value="SGD"/>
</dbReference>
<dbReference type="GO" id="GO:0008270">
    <property type="term" value="F:zinc ion binding"/>
    <property type="evidence" value="ECO:0000314"/>
    <property type="project" value="CAFA"/>
</dbReference>
<dbReference type="GO" id="GO:0009263">
    <property type="term" value="P:deoxyribonucleotide biosynthetic process"/>
    <property type="evidence" value="ECO:0000314"/>
    <property type="project" value="SGD"/>
</dbReference>
<dbReference type="CDD" id="cd01049">
    <property type="entry name" value="RNRR2"/>
    <property type="match status" value="1"/>
</dbReference>
<dbReference type="DisProt" id="DP00487"/>
<dbReference type="FunFam" id="1.10.620.20:FF:000010">
    <property type="entry name" value="Ribonucleotide reductase subunit"/>
    <property type="match status" value="1"/>
</dbReference>
<dbReference type="Gene3D" id="1.10.620.20">
    <property type="entry name" value="Ribonucleotide Reductase, subunit A"/>
    <property type="match status" value="1"/>
</dbReference>
<dbReference type="InterPro" id="IPR009078">
    <property type="entry name" value="Ferritin-like_SF"/>
</dbReference>
<dbReference type="InterPro" id="IPR012348">
    <property type="entry name" value="RNR-like"/>
</dbReference>
<dbReference type="InterPro" id="IPR033909">
    <property type="entry name" value="RNR_small"/>
</dbReference>
<dbReference type="InterPro" id="IPR030475">
    <property type="entry name" value="RNR_small_AS"/>
</dbReference>
<dbReference type="InterPro" id="IPR000358">
    <property type="entry name" value="RNR_small_fam"/>
</dbReference>
<dbReference type="PANTHER" id="PTHR23409">
    <property type="entry name" value="RIBONUCLEOSIDE-DIPHOSPHATE REDUCTASE SMALL CHAIN"/>
    <property type="match status" value="1"/>
</dbReference>
<dbReference type="PANTHER" id="PTHR23409:SF18">
    <property type="entry name" value="RIBONUCLEOSIDE-DIPHOSPHATE REDUCTASE SUBUNIT M2"/>
    <property type="match status" value="1"/>
</dbReference>
<dbReference type="Pfam" id="PF00268">
    <property type="entry name" value="Ribonuc_red_sm"/>
    <property type="match status" value="1"/>
</dbReference>
<dbReference type="SUPFAM" id="SSF47240">
    <property type="entry name" value="Ferritin-like"/>
    <property type="match status" value="1"/>
</dbReference>
<dbReference type="PROSITE" id="PS00368">
    <property type="entry name" value="RIBORED_SMALL"/>
    <property type="match status" value="1"/>
</dbReference>
<proteinExistence type="evidence at protein level"/>
<reference key="1">
    <citation type="journal article" date="1987" name="Mol. Cell. Biol.">
        <title>Identification and isolation of the gene encoding the small subunit of ribonucleotide reductase from Saccharomyces cerevisiae: DNA damage-inducible gene required for mitotic viability.</title>
        <authorList>
            <person name="Elledge S.J."/>
            <person name="Davis R.W."/>
        </authorList>
    </citation>
    <scope>NUCLEOTIDE SEQUENCE [GENOMIC DNA]</scope>
    <scope>INDUCTION</scope>
</reference>
<reference key="2">
    <citation type="journal article" date="1987" name="Mol. Cell. Biol.">
        <title>Identification of the gene for the yeast ribonucleotide reductase small subunit and its inducibility by methyl methanesulfonate.</title>
        <authorList>
            <person name="Hurd H.K."/>
            <person name="Roberts C.W."/>
            <person name="Roberts J.W."/>
        </authorList>
    </citation>
    <scope>NUCLEOTIDE SEQUENCE [GENOMIC DNA]</scope>
    <scope>INDUCTION</scope>
</reference>
<reference key="3">
    <citation type="journal article" date="1996" name="EMBO J.">
        <title>Complete nucleotide sequence of Saccharomyces cerevisiae chromosome X.</title>
        <authorList>
            <person name="Galibert F."/>
            <person name="Alexandraki D."/>
            <person name="Baur A."/>
            <person name="Boles E."/>
            <person name="Chalwatzis N."/>
            <person name="Chuat J.-C."/>
            <person name="Coster F."/>
            <person name="Cziepluch C."/>
            <person name="de Haan M."/>
            <person name="Domdey H."/>
            <person name="Durand P."/>
            <person name="Entian K.-D."/>
            <person name="Gatius M."/>
            <person name="Goffeau A."/>
            <person name="Grivell L.A."/>
            <person name="Hennemann A."/>
            <person name="Herbert C.J."/>
            <person name="Heumann K."/>
            <person name="Hilger F."/>
            <person name="Hollenberg C.P."/>
            <person name="Huang M.-E."/>
            <person name="Jacq C."/>
            <person name="Jauniaux J.-C."/>
            <person name="Katsoulou C."/>
            <person name="Kirchrath L."/>
            <person name="Kleine K."/>
            <person name="Kordes E."/>
            <person name="Koetter P."/>
            <person name="Liebl S."/>
            <person name="Louis E.J."/>
            <person name="Manus V."/>
            <person name="Mewes H.-W."/>
            <person name="Miosga T."/>
            <person name="Obermaier B."/>
            <person name="Perea J."/>
            <person name="Pohl T.M."/>
            <person name="Portetelle D."/>
            <person name="Pujol A."/>
            <person name="Purnelle B."/>
            <person name="Ramezani Rad M."/>
            <person name="Rasmussen S.W."/>
            <person name="Rose M."/>
            <person name="Rossau R."/>
            <person name="Schaaff-Gerstenschlaeger I."/>
            <person name="Smits P.H.M."/>
            <person name="Scarcez T."/>
            <person name="Soriano N."/>
            <person name="To Van D."/>
            <person name="Tzermia M."/>
            <person name="Van Broekhoven A."/>
            <person name="Vandenbol M."/>
            <person name="Wedler H."/>
            <person name="von Wettstein D."/>
            <person name="Wambutt R."/>
            <person name="Zagulski M."/>
            <person name="Zollner A."/>
            <person name="Karpfinger-Hartl L."/>
        </authorList>
    </citation>
    <scope>NUCLEOTIDE SEQUENCE [LARGE SCALE GENOMIC DNA]</scope>
    <source>
        <strain>ATCC 204508 / S288c</strain>
    </source>
</reference>
<reference key="4">
    <citation type="journal article" date="2014" name="G3 (Bethesda)">
        <title>The reference genome sequence of Saccharomyces cerevisiae: Then and now.</title>
        <authorList>
            <person name="Engel S.R."/>
            <person name="Dietrich F.S."/>
            <person name="Fisk D.G."/>
            <person name="Binkley G."/>
            <person name="Balakrishnan R."/>
            <person name="Costanzo M.C."/>
            <person name="Dwight S.S."/>
            <person name="Hitz B.C."/>
            <person name="Karra K."/>
            <person name="Nash R.S."/>
            <person name="Weng S."/>
            <person name="Wong E.D."/>
            <person name="Lloyd P."/>
            <person name="Skrzypek M.S."/>
            <person name="Miyasato S.R."/>
            <person name="Simison M."/>
            <person name="Cherry J.M."/>
        </authorList>
    </citation>
    <scope>GENOME REANNOTATION</scope>
    <source>
        <strain>ATCC 204508 / S288c</strain>
    </source>
</reference>
<reference key="5">
    <citation type="journal article" date="1999" name="Proc. Natl. Acad. Sci. U.S.A.">
        <title>Purification of ribonucleotide reductase subunits Y1, Y2, Y3, and Y4 from yeast: Y4 plays a key role in diiron cluster assembly.</title>
        <authorList>
            <person name="Nguyen H.-H.T."/>
            <person name="Ge J."/>
            <person name="Perlstein D.L."/>
            <person name="Stubbe J."/>
        </authorList>
    </citation>
    <scope>FUNCTION</scope>
    <scope>SUBUNIT</scope>
</reference>
<reference key="6">
    <citation type="journal article" date="2000" name="Proc. Natl. Acad. Sci. U.S.A.">
        <title>Yeast ribonucleotide reductase has a heterodimeric iron-radical-containing subunit.</title>
        <authorList>
            <person name="Chabes A."/>
            <person name="Domkin V."/>
            <person name="Larsson G."/>
            <person name="Liu A."/>
            <person name="Graeslund A."/>
            <person name="Wijmenga S."/>
            <person name="Thelander L."/>
        </authorList>
    </citation>
    <scope>SUBUNIT</scope>
    <scope>BIOPHYSICOCHEMICAL PROPERTIES</scope>
</reference>
<reference key="7">
    <citation type="journal article" date="2003" name="Nature">
        <title>Global analysis of protein expression in yeast.</title>
        <authorList>
            <person name="Ghaemmaghami S."/>
            <person name="Huh W.-K."/>
            <person name="Bower K."/>
            <person name="Howson R.W."/>
            <person name="Belle A."/>
            <person name="Dephoure N."/>
            <person name="O'Shea E.K."/>
            <person name="Weissman J.S."/>
        </authorList>
    </citation>
    <scope>LEVEL OF PROTEIN EXPRESSION [LARGE SCALE ANALYSIS]</scope>
</reference>
<reference key="8">
    <citation type="journal article" date="2003" name="Proc. Natl. Acad. Sci. U.S.A.">
        <title>Subcellular localization of yeast ribonucleotide reductase regulated by the DNA replication and damage checkpoint pathways.</title>
        <authorList>
            <person name="Yao R."/>
            <person name="Zhang Z."/>
            <person name="An X."/>
            <person name="Bucci B."/>
            <person name="Perlstein D.L."/>
            <person name="Stubbe J."/>
            <person name="Huang M."/>
        </authorList>
    </citation>
    <scope>SUBCELLULAR LOCATION</scope>
</reference>
<reference key="9">
    <citation type="journal article" date="2005" name="Mol. Cell. Proteomics">
        <title>Quantitative phosphoproteomics applied to the yeast pheromone signaling pathway.</title>
        <authorList>
            <person name="Gruhler A."/>
            <person name="Olsen J.V."/>
            <person name="Mohammed S."/>
            <person name="Mortensen P."/>
            <person name="Faergeman N.J."/>
            <person name="Mann M."/>
            <person name="Jensen O.N."/>
        </authorList>
    </citation>
    <scope>PHOSPHORYLATION [LARGE SCALE ANALYSIS] AT SER-15</scope>
    <scope>IDENTIFICATION BY MASS SPECTROMETRY [LARGE SCALE ANALYSIS]</scope>
    <source>
        <strain>YAL6B</strain>
    </source>
</reference>
<reference key="10">
    <citation type="journal article" date="2007" name="J. Proteome Res.">
        <title>Large-scale phosphorylation analysis of alpha-factor-arrested Saccharomyces cerevisiae.</title>
        <authorList>
            <person name="Li X."/>
            <person name="Gerber S.A."/>
            <person name="Rudner A.D."/>
            <person name="Beausoleil S.A."/>
            <person name="Haas W."/>
            <person name="Villen J."/>
            <person name="Elias J.E."/>
            <person name="Gygi S.P."/>
        </authorList>
    </citation>
    <scope>PHOSPHORYLATION [LARGE SCALE ANALYSIS] AT SER-15</scope>
    <scope>IDENTIFICATION BY MASS SPECTROMETRY [LARGE SCALE ANALYSIS]</scope>
    <source>
        <strain>ADR376</strain>
    </source>
</reference>
<reference key="11">
    <citation type="journal article" date="2007" name="Proc. Natl. Acad. Sci. U.S.A.">
        <title>Analysis of phosphorylation sites on proteins from Saccharomyces cerevisiae by electron transfer dissociation (ETD) mass spectrometry.</title>
        <authorList>
            <person name="Chi A."/>
            <person name="Huttenhower C."/>
            <person name="Geer L.Y."/>
            <person name="Coon J.J."/>
            <person name="Syka J.E.P."/>
            <person name="Bai D.L."/>
            <person name="Shabanowitz J."/>
            <person name="Burke D.J."/>
            <person name="Troyanskaya O.G."/>
            <person name="Hunt D.F."/>
        </authorList>
    </citation>
    <scope>PHOSPHORYLATION [LARGE SCALE ANALYSIS] AT SER-41</scope>
    <scope>IDENTIFICATION BY MASS SPECTROMETRY [LARGE SCALE ANALYSIS]</scope>
</reference>
<reference key="12">
    <citation type="journal article" date="2008" name="Mol. Cell">
        <title>Dif1 is a DNA-damage-regulated facilitator of nuclear import for ribonucleotide reductase.</title>
        <authorList>
            <person name="Lee Y.D."/>
            <person name="Wang J."/>
            <person name="Stubbe J."/>
            <person name="Elledge S.J."/>
        </authorList>
    </citation>
    <scope>SUBCELLULAR LOCATION</scope>
    <scope>INTERACTION WITH DIF1 AND RNR4</scope>
</reference>
<reference key="13">
    <citation type="journal article" date="2008" name="Mol. Cell. Proteomics">
        <title>A multidimensional chromatography technology for in-depth phosphoproteome analysis.</title>
        <authorList>
            <person name="Albuquerque C.P."/>
            <person name="Smolka M.B."/>
            <person name="Payne S.H."/>
            <person name="Bafna V."/>
            <person name="Eng J."/>
            <person name="Zhou H."/>
        </authorList>
    </citation>
    <scope>PHOSPHORYLATION [LARGE SCALE ANALYSIS] AT SER-15</scope>
    <scope>IDENTIFICATION BY MASS SPECTROMETRY [LARGE SCALE ANALYSIS]</scope>
</reference>
<reference key="14">
    <citation type="journal article" date="2009" name="Science">
        <title>Global analysis of Cdk1 substrate phosphorylation sites provides insights into evolution.</title>
        <authorList>
            <person name="Holt L.J."/>
            <person name="Tuch B.B."/>
            <person name="Villen J."/>
            <person name="Johnson A.D."/>
            <person name="Gygi S.P."/>
            <person name="Morgan D.O."/>
        </authorList>
    </citation>
    <scope>PHOSPHORYLATION [LARGE SCALE ANALYSIS] AT SER-15 AND SER-24</scope>
    <scope>IDENTIFICATION BY MASS SPECTROMETRY [LARGE SCALE ANALYSIS]</scope>
</reference>
<reference key="15">
    <citation type="journal article" date="2001" name="Proc. Natl. Acad. Sci. U.S.A.">
        <title>Structure of the yeast ribonucleotide reductase Y2Y4 heterodimer.</title>
        <authorList>
            <person name="Voegtli W.C."/>
            <person name="Ge J."/>
            <person name="Perlstein D.L."/>
            <person name="Stubbe J."/>
            <person name="Rosenzweig A.C."/>
        </authorList>
    </citation>
    <scope>X-RAY CRYSTALLOGRAPHY (2.8 ANGSTROMS)</scope>
</reference>
<reference key="16">
    <citation type="journal article" date="2004" name="Biochemistry">
        <title>Structures of the yeast ribonucleotide reductase Rnr2 and Rnr4 homodimers.</title>
        <authorList>
            <person name="Sommerhalter M."/>
            <person name="Voegtli W.C."/>
            <person name="Perlstein D.L."/>
            <person name="Ge J."/>
            <person name="Stubbe J."/>
            <person name="Rosenzweig A.C."/>
        </authorList>
    </citation>
    <scope>X-RAY CRYSTALLOGRAPHY (3.1 ANGSTROMS)</scope>
</reference>
<keyword id="KW-0002">3D-structure</keyword>
<keyword id="KW-0215">Deoxyribonucleotide synthesis</keyword>
<keyword id="KW-0408">Iron</keyword>
<keyword id="KW-0479">Metal-binding</keyword>
<keyword id="KW-0539">Nucleus</keyword>
<keyword id="KW-0560">Oxidoreductase</keyword>
<keyword id="KW-0597">Phosphoprotein</keyword>
<keyword id="KW-1185">Reference proteome</keyword>
<organism>
    <name type="scientific">Saccharomyces cerevisiae (strain ATCC 204508 / S288c)</name>
    <name type="common">Baker's yeast</name>
    <dbReference type="NCBI Taxonomy" id="559292"/>
    <lineage>
        <taxon>Eukaryota</taxon>
        <taxon>Fungi</taxon>
        <taxon>Dikarya</taxon>
        <taxon>Ascomycota</taxon>
        <taxon>Saccharomycotina</taxon>
        <taxon>Saccharomycetes</taxon>
        <taxon>Saccharomycetales</taxon>
        <taxon>Saccharomycetaceae</taxon>
        <taxon>Saccharomyces</taxon>
    </lineage>
</organism>
<comment type="function">
    <text evidence="2">Provides the precursors necessary for DNA synthesis. Catalyzes the biosynthesis of deoxyribonucleotides from the corresponding ribonucleotides. RNR2 provides the diiron-tyrosyl radical center.</text>
</comment>
<comment type="catalytic activity">
    <reaction evidence="1">
        <text>a 2'-deoxyribonucleoside 5'-diphosphate + [thioredoxin]-disulfide + H2O = a ribonucleoside 5'-diphosphate + [thioredoxin]-dithiol</text>
        <dbReference type="Rhea" id="RHEA:23252"/>
        <dbReference type="Rhea" id="RHEA-COMP:10698"/>
        <dbReference type="Rhea" id="RHEA-COMP:10700"/>
        <dbReference type="ChEBI" id="CHEBI:15377"/>
        <dbReference type="ChEBI" id="CHEBI:29950"/>
        <dbReference type="ChEBI" id="CHEBI:50058"/>
        <dbReference type="ChEBI" id="CHEBI:57930"/>
        <dbReference type="ChEBI" id="CHEBI:73316"/>
        <dbReference type="EC" id="1.17.4.1"/>
    </reaction>
</comment>
<comment type="cofactor">
    <cofactor>
        <name>Fe cation</name>
        <dbReference type="ChEBI" id="CHEBI:24875"/>
    </cofactor>
    <text>Binds 2 iron ions per subunit.</text>
</comment>
<comment type="biophysicochemical properties">
    <kinetics>
        <Vmax evidence="3">2250.0 nmol/min/mg enzyme for cytidine 5'-diphosphate</Vmax>
    </kinetics>
    <temperatureDependence>
        <text evidence="3">Optimum temperature is 30 degrees Celsius.</text>
    </temperatureDependence>
</comment>
<comment type="subunit">
    <text evidence="2 3 6">Heterotetramer of two large (R1) and two small (R2) subunits. S.cerevisiae has two different R1 subunits (RNR1 and RNR3) and two different R2 subunits (RNR2 and RNR4). The functional form of the small subunits is a RNR2-RNR4 heterodimer, where RNR2 provides the iron-radical center and RNR4 is required for proper folding of RNR2 and assembly with the large subunits. Under normal growth conditions, the active form of the large subunits is a homodimer of the constitutively expressed RNR1. In damaged cells or cells arrested for DNA synthesis, the reductase consists of multiple species because of the association of the small subunits (RNR2-RNR4) with either the RNR1 homodimer or a heterodimer of RNR1 and the damage-inducible RNR3. Interacts with DIF1.</text>
</comment>
<comment type="interaction">
    <interactant intactId="EBI-15240">
        <id>P09938</id>
    </interactant>
    <interactant intactId="EBI-15234">
        <id>P21524</id>
        <label>RNR1</label>
    </interactant>
    <organismsDiffer>false</organismsDiffer>
    <experiments>6</experiments>
</comment>
<comment type="interaction">
    <interactant intactId="EBI-15240">
        <id>P09938</id>
    </interactant>
    <interactant intactId="EBI-15251">
        <id>P49723</id>
        <label>RNR4</label>
    </interactant>
    <organismsDiffer>false</organismsDiffer>
    <experiments>9</experiments>
</comment>
<comment type="subcellular location">
    <subcellularLocation>
        <location evidence="4 6">Nucleus</location>
    </subcellularLocation>
    <text>Found predominantly in the nucleus under normal growth conditions and is redistributed to the cytoplasm in damaged cells in a DNA replication and damage checkpoint-dependent manner. Nuclear localization is mediated by DIF1.</text>
</comment>
<comment type="induction">
    <text evidence="7 8">Induced by DNA-damage.</text>
</comment>
<comment type="miscellaneous">
    <text evidence="5">Present with 538 molecules/cell in log phase SD medium.</text>
</comment>
<comment type="similarity">
    <text evidence="9">Belongs to the ribonucleoside diphosphate reductase small chain family.</text>
</comment>
<accession>P09938</accession>
<accession>D6VWF6</accession>
<evidence type="ECO:0000255" key="1">
    <source>
        <dbReference type="PROSITE-ProRule" id="PRU10014"/>
    </source>
</evidence>
<evidence type="ECO:0000269" key="2">
    <source>
    </source>
</evidence>
<evidence type="ECO:0000269" key="3">
    <source>
    </source>
</evidence>
<evidence type="ECO:0000269" key="4">
    <source>
    </source>
</evidence>
<evidence type="ECO:0000269" key="5">
    <source>
    </source>
</evidence>
<evidence type="ECO:0000269" key="6">
    <source>
    </source>
</evidence>
<evidence type="ECO:0000269" key="7">
    <source>
    </source>
</evidence>
<evidence type="ECO:0000269" key="8">
    <source>
    </source>
</evidence>
<evidence type="ECO:0000305" key="9"/>
<evidence type="ECO:0007744" key="10">
    <source>
    </source>
</evidence>
<evidence type="ECO:0007744" key="11">
    <source>
    </source>
</evidence>
<evidence type="ECO:0007744" key="12">
    <source>
    </source>
</evidence>
<evidence type="ECO:0007744" key="13">
    <source>
    </source>
</evidence>
<evidence type="ECO:0007744" key="14">
    <source>
    </source>
</evidence>
<evidence type="ECO:0007829" key="15">
    <source>
        <dbReference type="PDB" id="1JK0"/>
    </source>
</evidence>
<gene>
    <name type="primary">RNR2</name>
    <name type="synonym">CRT6</name>
    <name type="ordered locus">YJL026W</name>
    <name type="ORF">J1271</name>
</gene>
<feature type="chain" id="PRO_0000190464" description="Ribonucleoside-diphosphate reductase small chain 1">
    <location>
        <begin position="1"/>
        <end position="399"/>
    </location>
</feature>
<feature type="active site">
    <location>
        <position position="183"/>
    </location>
</feature>
<feature type="binding site">
    <location>
        <position position="145"/>
    </location>
    <ligand>
        <name>Fe cation</name>
        <dbReference type="ChEBI" id="CHEBI:24875"/>
        <label>1</label>
    </ligand>
</feature>
<feature type="binding site">
    <location>
        <position position="176"/>
    </location>
    <ligand>
        <name>Fe cation</name>
        <dbReference type="ChEBI" id="CHEBI:24875"/>
        <label>1</label>
    </ligand>
</feature>
<feature type="binding site">
    <location>
        <position position="176"/>
    </location>
    <ligand>
        <name>Fe cation</name>
        <dbReference type="ChEBI" id="CHEBI:24875"/>
        <label>2</label>
    </ligand>
</feature>
<feature type="binding site">
    <location>
        <position position="179"/>
    </location>
    <ligand>
        <name>Fe cation</name>
        <dbReference type="ChEBI" id="CHEBI:24875"/>
        <label>1</label>
    </ligand>
</feature>
<feature type="binding site">
    <location>
        <position position="239"/>
    </location>
    <ligand>
        <name>Fe cation</name>
        <dbReference type="ChEBI" id="CHEBI:24875"/>
        <label>2</label>
    </ligand>
</feature>
<feature type="binding site">
    <location>
        <position position="273"/>
    </location>
    <ligand>
        <name>Fe cation</name>
        <dbReference type="ChEBI" id="CHEBI:24875"/>
        <label>2</label>
    </ligand>
</feature>
<feature type="binding site">
    <location>
        <position position="276"/>
    </location>
    <ligand>
        <name>Fe cation</name>
        <dbReference type="ChEBI" id="CHEBI:24875"/>
        <label>2</label>
    </ligand>
</feature>
<feature type="modified residue" description="Phosphoserine" evidence="10 12 13 14">
    <location>
        <position position="15"/>
    </location>
</feature>
<feature type="modified residue" description="Phosphoserine" evidence="14">
    <location>
        <position position="24"/>
    </location>
</feature>
<feature type="modified residue" description="Phosphoserine" evidence="11">
    <location>
        <position position="41"/>
    </location>
</feature>
<feature type="sequence conflict" description="In Ref. 1; AAA34987." evidence="9" ref="1">
    <location>
        <begin position="101"/>
        <end position="103"/>
    </location>
</feature>
<feature type="sequence conflict" description="In Ref. 1." evidence="9" ref="1">
    <original>E</original>
    <variation>ETAE</variation>
    <location>
        <position position="111"/>
    </location>
</feature>
<feature type="helix" evidence="15">
    <location>
        <begin position="27"/>
        <end position="36"/>
    </location>
</feature>
<feature type="helix" evidence="15">
    <location>
        <begin position="38"/>
        <end position="49"/>
    </location>
</feature>
<feature type="helix" evidence="15">
    <location>
        <begin position="51"/>
        <end position="61"/>
    </location>
</feature>
<feature type="helix" evidence="15">
    <location>
        <begin position="63"/>
        <end position="72"/>
    </location>
</feature>
<feature type="helix" evidence="15">
    <location>
        <begin position="73"/>
        <end position="75"/>
    </location>
</feature>
<feature type="helix" evidence="15">
    <location>
        <begin position="77"/>
        <end position="79"/>
    </location>
</feature>
<feature type="helix" evidence="15">
    <location>
        <begin position="94"/>
        <end position="104"/>
    </location>
</feature>
<feature type="helix" evidence="15">
    <location>
        <begin position="110"/>
        <end position="112"/>
    </location>
</feature>
<feature type="helix" evidence="15">
    <location>
        <begin position="118"/>
        <end position="124"/>
    </location>
</feature>
<feature type="helix" evidence="15">
    <location>
        <begin position="128"/>
        <end position="142"/>
    </location>
</feature>
<feature type="helix" evidence="15">
    <location>
        <begin position="147"/>
        <end position="152"/>
    </location>
</feature>
<feature type="helix" evidence="15">
    <location>
        <begin position="153"/>
        <end position="157"/>
    </location>
</feature>
<feature type="helix" evidence="15">
    <location>
        <begin position="163"/>
        <end position="190"/>
    </location>
</feature>
<feature type="helix" evidence="15">
    <location>
        <begin position="194"/>
        <end position="204"/>
    </location>
</feature>
<feature type="helix" evidence="15">
    <location>
        <begin position="208"/>
        <end position="220"/>
    </location>
</feature>
<feature type="strand" evidence="15">
    <location>
        <begin position="223"/>
        <end position="225"/>
    </location>
</feature>
<feature type="helix" evidence="15">
    <location>
        <begin position="228"/>
        <end position="240"/>
    </location>
</feature>
<feature type="turn" evidence="15">
    <location>
        <begin position="241"/>
        <end position="243"/>
    </location>
</feature>
<feature type="helix" evidence="15">
    <location>
        <begin position="244"/>
        <end position="255"/>
    </location>
</feature>
<feature type="helix" evidence="15">
    <location>
        <begin position="260"/>
        <end position="285"/>
    </location>
</feature>
<feature type="helix" evidence="15">
    <location>
        <begin position="293"/>
        <end position="312"/>
    </location>
</feature>
<feature type="helix" evidence="15">
    <location>
        <begin position="317"/>
        <end position="320"/>
    </location>
</feature>
<feature type="helix" evidence="15">
    <location>
        <begin position="324"/>
        <end position="340"/>
    </location>
</feature>
<feature type="turn" evidence="15">
    <location>
        <begin position="341"/>
        <end position="343"/>
    </location>
</feature>
<feature type="helix" evidence="15">
    <location>
        <begin position="355"/>
        <end position="358"/>
    </location>
</feature>